<name>SPB4_PHANO</name>
<proteinExistence type="inferred from homology"/>
<evidence type="ECO:0000250" key="1">
    <source>
        <dbReference type="UniProtKB" id="P25808"/>
    </source>
</evidence>
<evidence type="ECO:0000255" key="2"/>
<evidence type="ECO:0000255" key="3">
    <source>
        <dbReference type="PROSITE-ProRule" id="PRU00541"/>
    </source>
</evidence>
<evidence type="ECO:0000255" key="4">
    <source>
        <dbReference type="PROSITE-ProRule" id="PRU00542"/>
    </source>
</evidence>
<evidence type="ECO:0000256" key="5">
    <source>
        <dbReference type="SAM" id="MobiDB-lite"/>
    </source>
</evidence>
<evidence type="ECO:0000305" key="6"/>
<comment type="function">
    <text evidence="1">ATP-binding RNA helicase involved in the biogenesis of 60S ribosomal subunits. Binds 90S pre-ribosomal particles and dissociates from pre-60S ribosomal particles after processing of 27SB pre-rRNA. Required for the normal formation of 18S rRNA through the processing of pre-rRNAs at sites A0, A1 and A2, and the normal formation of 25S and 5.8S rRNAs through the processing of pre-rRNAs at sites C1 and C2.</text>
</comment>
<comment type="catalytic activity">
    <reaction evidence="1">
        <text>ATP + H2O = ADP + phosphate + H(+)</text>
        <dbReference type="Rhea" id="RHEA:13065"/>
        <dbReference type="ChEBI" id="CHEBI:15377"/>
        <dbReference type="ChEBI" id="CHEBI:15378"/>
        <dbReference type="ChEBI" id="CHEBI:30616"/>
        <dbReference type="ChEBI" id="CHEBI:43474"/>
        <dbReference type="ChEBI" id="CHEBI:456216"/>
        <dbReference type="EC" id="3.6.4.13"/>
    </reaction>
</comment>
<comment type="subunit">
    <text evidence="1">Component of pre-60S ribosomal complexes.</text>
</comment>
<comment type="subcellular location">
    <subcellularLocation>
        <location evidence="1">Nucleus</location>
        <location evidence="1">Nucleolus</location>
    </subcellularLocation>
</comment>
<comment type="domain">
    <text>The Q motif is unique to and characteristic of the DEAD box family of RNA helicases and controls ATP binding and hydrolysis.</text>
</comment>
<comment type="similarity">
    <text evidence="6">Belongs to the DEAD box helicase family. DDX55/SPB4 subfamily.</text>
</comment>
<dbReference type="EC" id="3.6.4.13" evidence="1"/>
<dbReference type="EMBL" id="CH445333">
    <property type="protein sequence ID" value="EAT86300.1"/>
    <property type="molecule type" value="Genomic_DNA"/>
</dbReference>
<dbReference type="RefSeq" id="XP_001796839.1">
    <property type="nucleotide sequence ID" value="XM_001796787.1"/>
</dbReference>
<dbReference type="SMR" id="Q0UP45"/>
<dbReference type="FunCoup" id="Q0UP45">
    <property type="interactions" value="1092"/>
</dbReference>
<dbReference type="STRING" id="321614.Q0UP45"/>
<dbReference type="EnsemblFungi" id="SNOT_06469">
    <property type="protein sequence ID" value="SNOT_06469"/>
    <property type="gene ID" value="SNOG_06469"/>
</dbReference>
<dbReference type="GeneID" id="5973718"/>
<dbReference type="KEGG" id="pno:SNOG_06469"/>
<dbReference type="VEuPathDB" id="FungiDB:JI435_064690"/>
<dbReference type="eggNOG" id="KOG0345">
    <property type="taxonomic scope" value="Eukaryota"/>
</dbReference>
<dbReference type="HOGENOM" id="CLU_003041_26_4_1"/>
<dbReference type="InParanoid" id="Q0UP45"/>
<dbReference type="OMA" id="AYKEHEC"/>
<dbReference type="OrthoDB" id="7396459at2759"/>
<dbReference type="Proteomes" id="UP000001055">
    <property type="component" value="Unassembled WGS sequence"/>
</dbReference>
<dbReference type="GO" id="GO:0030686">
    <property type="term" value="C:90S preribosome"/>
    <property type="evidence" value="ECO:0007669"/>
    <property type="project" value="EnsemblFungi"/>
</dbReference>
<dbReference type="GO" id="GO:0005730">
    <property type="term" value="C:nucleolus"/>
    <property type="evidence" value="ECO:0000318"/>
    <property type="project" value="GO_Central"/>
</dbReference>
<dbReference type="GO" id="GO:0005654">
    <property type="term" value="C:nucleoplasm"/>
    <property type="evidence" value="ECO:0007669"/>
    <property type="project" value="EnsemblFungi"/>
</dbReference>
<dbReference type="GO" id="GO:0030687">
    <property type="term" value="C:preribosome, large subunit precursor"/>
    <property type="evidence" value="ECO:0007669"/>
    <property type="project" value="EnsemblFungi"/>
</dbReference>
<dbReference type="GO" id="GO:0005524">
    <property type="term" value="F:ATP binding"/>
    <property type="evidence" value="ECO:0007669"/>
    <property type="project" value="UniProtKB-KW"/>
</dbReference>
<dbReference type="GO" id="GO:0016887">
    <property type="term" value="F:ATP hydrolysis activity"/>
    <property type="evidence" value="ECO:0007669"/>
    <property type="project" value="RHEA"/>
</dbReference>
<dbReference type="GO" id="GO:0003723">
    <property type="term" value="F:RNA binding"/>
    <property type="evidence" value="ECO:0007669"/>
    <property type="project" value="UniProtKB-KW"/>
</dbReference>
<dbReference type="GO" id="GO:0003724">
    <property type="term" value="F:RNA helicase activity"/>
    <property type="evidence" value="ECO:0007669"/>
    <property type="project" value="UniProtKB-EC"/>
</dbReference>
<dbReference type="GO" id="GO:1902626">
    <property type="term" value="P:assembly of large subunit precursor of preribosome"/>
    <property type="evidence" value="ECO:0007669"/>
    <property type="project" value="EnsemblFungi"/>
</dbReference>
<dbReference type="GO" id="GO:0000470">
    <property type="term" value="P:maturation of LSU-rRNA"/>
    <property type="evidence" value="ECO:0007669"/>
    <property type="project" value="EnsemblFungi"/>
</dbReference>
<dbReference type="CDD" id="cd17960">
    <property type="entry name" value="DEADc_DDX55"/>
    <property type="match status" value="1"/>
</dbReference>
<dbReference type="CDD" id="cd18787">
    <property type="entry name" value="SF2_C_DEAD"/>
    <property type="match status" value="1"/>
</dbReference>
<dbReference type="Gene3D" id="3.40.50.300">
    <property type="entry name" value="P-loop containing nucleotide triphosphate hydrolases"/>
    <property type="match status" value="2"/>
</dbReference>
<dbReference type="InterPro" id="IPR056330">
    <property type="entry name" value="CTT_SPB4"/>
</dbReference>
<dbReference type="InterPro" id="IPR011545">
    <property type="entry name" value="DEAD/DEAH_box_helicase_dom"/>
</dbReference>
<dbReference type="InterPro" id="IPR014001">
    <property type="entry name" value="Helicase_ATP-bd"/>
</dbReference>
<dbReference type="InterPro" id="IPR001650">
    <property type="entry name" value="Helicase_C-like"/>
</dbReference>
<dbReference type="InterPro" id="IPR027417">
    <property type="entry name" value="P-loop_NTPase"/>
</dbReference>
<dbReference type="InterPro" id="IPR000629">
    <property type="entry name" value="RNA-helicase_DEAD-box_CS"/>
</dbReference>
<dbReference type="InterPro" id="IPR025313">
    <property type="entry name" value="SPB4-like_CTE"/>
</dbReference>
<dbReference type="PANTHER" id="PTHR24031">
    <property type="entry name" value="RNA HELICASE"/>
    <property type="match status" value="1"/>
</dbReference>
<dbReference type="Pfam" id="PF13959">
    <property type="entry name" value="CTE_SPB4"/>
    <property type="match status" value="1"/>
</dbReference>
<dbReference type="Pfam" id="PF23681">
    <property type="entry name" value="CTT_SPB4"/>
    <property type="match status" value="1"/>
</dbReference>
<dbReference type="Pfam" id="PF00270">
    <property type="entry name" value="DEAD"/>
    <property type="match status" value="1"/>
</dbReference>
<dbReference type="Pfam" id="PF00271">
    <property type="entry name" value="Helicase_C"/>
    <property type="match status" value="1"/>
</dbReference>
<dbReference type="SMART" id="SM00487">
    <property type="entry name" value="DEXDc"/>
    <property type="match status" value="1"/>
</dbReference>
<dbReference type="SMART" id="SM01178">
    <property type="entry name" value="DUF4217"/>
    <property type="match status" value="1"/>
</dbReference>
<dbReference type="SMART" id="SM00490">
    <property type="entry name" value="HELICc"/>
    <property type="match status" value="1"/>
</dbReference>
<dbReference type="SUPFAM" id="SSF52540">
    <property type="entry name" value="P-loop containing nucleoside triphosphate hydrolases"/>
    <property type="match status" value="1"/>
</dbReference>
<dbReference type="PROSITE" id="PS00039">
    <property type="entry name" value="DEAD_ATP_HELICASE"/>
    <property type="match status" value="1"/>
</dbReference>
<dbReference type="PROSITE" id="PS51192">
    <property type="entry name" value="HELICASE_ATP_BIND_1"/>
    <property type="match status" value="1"/>
</dbReference>
<dbReference type="PROSITE" id="PS51194">
    <property type="entry name" value="HELICASE_CTER"/>
    <property type="match status" value="1"/>
</dbReference>
<dbReference type="PROSITE" id="PS51195">
    <property type="entry name" value="Q_MOTIF"/>
    <property type="match status" value="1"/>
</dbReference>
<sequence length="633" mass="71204">MAPQTKIDRSFSALTPALSEWIIDAVDAMGFVKTTPVQHAAIPMFMKNSDVVVEAVTGSGKTLAFLIPIVERLLREDAPTKKHHVGAIIISPTRELATQIHTVLSSLLKFHAPSAAMLEPDDEDTDMEDADTPPKPTFPPGTLKAVPQLLLGGSVTPAQDLSAFLKKSPNILIGTPGRLLELLRSPHVHCPQSSFDALVMDEADRLLDLGFKEDLQKIISRLPKQRRTGLFSASMSEAVDQLIRVGLRNPVRIAVKVKARATGEDGKIEDKRTPASLQMSYLVTPPSHKIPAMKKILSSLQPQPQKSILYLSTCFSVDYFQHVLPEVLQGYDIVPLHGKHPDKVRRKNFNKFVDSVTPSILLTTDVAARGLDIPSVDLVFQLDPPSDPKTFIHRCGRAGRAGRRGLAVTFLNPGREEDYIEFLQVRQTPISPLTTPEITVTDEDAKAVTSKIRKKVREDRALFDKAQRGFVSWVRAYSKHTASSIFRIDDLDWTELGNAWGLLTLPGMPELKKWQGDKRLGIELDLATYAYKDKAREKLRLEELERDKEEGTKKKQHKKEDREKSAWTEQKESKATKEVRREKKKSKREHERLAKMTDEERKEEDRVQAMIEQMRKKVAKQEAEDADFEGFSD</sequence>
<gene>
    <name evidence="1" type="primary">SPB4</name>
    <name type="ORF">SNOG_06469</name>
</gene>
<organism>
    <name type="scientific">Phaeosphaeria nodorum (strain SN15 / ATCC MYA-4574 / FGSC 10173)</name>
    <name type="common">Glume blotch fungus</name>
    <name type="synonym">Parastagonospora nodorum</name>
    <dbReference type="NCBI Taxonomy" id="321614"/>
    <lineage>
        <taxon>Eukaryota</taxon>
        <taxon>Fungi</taxon>
        <taxon>Dikarya</taxon>
        <taxon>Ascomycota</taxon>
        <taxon>Pezizomycotina</taxon>
        <taxon>Dothideomycetes</taxon>
        <taxon>Pleosporomycetidae</taxon>
        <taxon>Pleosporales</taxon>
        <taxon>Pleosporineae</taxon>
        <taxon>Phaeosphaeriaceae</taxon>
        <taxon>Parastagonospora</taxon>
    </lineage>
</organism>
<protein>
    <recommendedName>
        <fullName evidence="6">ATP-dependent rRNA helicase SPB4</fullName>
        <ecNumber evidence="1">3.6.4.13</ecNumber>
    </recommendedName>
</protein>
<reference key="1">
    <citation type="journal article" date="2007" name="Plant Cell">
        <title>Dothideomycete-plant interactions illuminated by genome sequencing and EST analysis of the wheat pathogen Stagonospora nodorum.</title>
        <authorList>
            <person name="Hane J.K."/>
            <person name="Lowe R.G.T."/>
            <person name="Solomon P.S."/>
            <person name="Tan K.-C."/>
            <person name="Schoch C.L."/>
            <person name="Spatafora J.W."/>
            <person name="Crous P.W."/>
            <person name="Kodira C.D."/>
            <person name="Birren B.W."/>
            <person name="Galagan J.E."/>
            <person name="Torriani S.F.F."/>
            <person name="McDonald B.A."/>
            <person name="Oliver R.P."/>
        </authorList>
    </citation>
    <scope>NUCLEOTIDE SEQUENCE [LARGE SCALE GENOMIC DNA]</scope>
    <source>
        <strain>SN15 / ATCC MYA-4574 / FGSC 10173</strain>
    </source>
</reference>
<accession>Q0UP45</accession>
<feature type="chain" id="PRO_0000282707" description="ATP-dependent rRNA helicase SPB4">
    <location>
        <begin position="1"/>
        <end position="633"/>
    </location>
</feature>
<feature type="domain" description="Helicase ATP-binding" evidence="3">
    <location>
        <begin position="42"/>
        <end position="253"/>
    </location>
</feature>
<feature type="domain" description="Helicase C-terminal" evidence="4">
    <location>
        <begin position="292"/>
        <end position="446"/>
    </location>
</feature>
<feature type="region of interest" description="Disordered" evidence="5">
    <location>
        <begin position="119"/>
        <end position="140"/>
    </location>
</feature>
<feature type="region of interest" description="Disordered" evidence="5">
    <location>
        <begin position="547"/>
        <end position="633"/>
    </location>
</feature>
<feature type="coiled-coil region" evidence="2">
    <location>
        <begin position="530"/>
        <end position="629"/>
    </location>
</feature>
<feature type="short sequence motif" description="Q motif" evidence="6">
    <location>
        <begin position="11"/>
        <end position="39"/>
    </location>
</feature>
<feature type="short sequence motif" description="DEAD box" evidence="6">
    <location>
        <begin position="201"/>
        <end position="204"/>
    </location>
</feature>
<feature type="compositionally biased region" description="Acidic residues" evidence="5">
    <location>
        <begin position="119"/>
        <end position="131"/>
    </location>
</feature>
<feature type="compositionally biased region" description="Basic and acidic residues" evidence="5">
    <location>
        <begin position="547"/>
        <end position="581"/>
    </location>
</feature>
<feature type="compositionally biased region" description="Basic and acidic residues" evidence="5">
    <location>
        <begin position="588"/>
        <end position="623"/>
    </location>
</feature>
<feature type="compositionally biased region" description="Acidic residues" evidence="5">
    <location>
        <begin position="624"/>
        <end position="633"/>
    </location>
</feature>
<feature type="binding site" evidence="3">
    <location>
        <begin position="55"/>
        <end position="62"/>
    </location>
    <ligand>
        <name>ATP</name>
        <dbReference type="ChEBI" id="CHEBI:30616"/>
    </ligand>
</feature>
<keyword id="KW-0067">ATP-binding</keyword>
<keyword id="KW-0175">Coiled coil</keyword>
<keyword id="KW-0347">Helicase</keyword>
<keyword id="KW-0378">Hydrolase</keyword>
<keyword id="KW-0547">Nucleotide-binding</keyword>
<keyword id="KW-0539">Nucleus</keyword>
<keyword id="KW-0690">Ribosome biogenesis</keyword>
<keyword id="KW-0694">RNA-binding</keyword>
<keyword id="KW-0698">rRNA processing</keyword>